<comment type="function">
    <text evidence="1">Protein S19 forms a complex with S13 that binds strongly to the 16S ribosomal RNA.</text>
</comment>
<comment type="similarity">
    <text evidence="1">Belongs to the universal ribosomal protein uS19 family.</text>
</comment>
<organism>
    <name type="scientific">Chlorobium limicola (strain DSM 245 / NBRC 103803 / 6330)</name>
    <dbReference type="NCBI Taxonomy" id="290315"/>
    <lineage>
        <taxon>Bacteria</taxon>
        <taxon>Pseudomonadati</taxon>
        <taxon>Chlorobiota</taxon>
        <taxon>Chlorobiia</taxon>
        <taxon>Chlorobiales</taxon>
        <taxon>Chlorobiaceae</taxon>
        <taxon>Chlorobium/Pelodictyon group</taxon>
        <taxon>Chlorobium</taxon>
    </lineage>
</organism>
<name>RS19_CHLL2</name>
<evidence type="ECO:0000255" key="1">
    <source>
        <dbReference type="HAMAP-Rule" id="MF_00531"/>
    </source>
</evidence>
<evidence type="ECO:0000256" key="2">
    <source>
        <dbReference type="SAM" id="MobiDB-lite"/>
    </source>
</evidence>
<evidence type="ECO:0000305" key="3"/>
<sequence length="98" mass="10855">MPRSLKKGPFIDFKLEKRILDLNAKDEKKVVKTWSRSSMISPDFVGHTIAVHNGKTHVPVYVSDNMVGHKLGEFAPTRTFRGHAGGKAEKGGSAPRKK</sequence>
<keyword id="KW-0687">Ribonucleoprotein</keyword>
<keyword id="KW-0689">Ribosomal protein</keyword>
<keyword id="KW-0694">RNA-binding</keyword>
<keyword id="KW-0699">rRNA-binding</keyword>
<proteinExistence type="inferred from homology"/>
<feature type="chain" id="PRO_1000127945" description="Small ribosomal subunit protein uS19">
    <location>
        <begin position="1"/>
        <end position="98"/>
    </location>
</feature>
<feature type="region of interest" description="Disordered" evidence="2">
    <location>
        <begin position="77"/>
        <end position="98"/>
    </location>
</feature>
<protein>
    <recommendedName>
        <fullName evidence="1">Small ribosomal subunit protein uS19</fullName>
    </recommendedName>
    <alternativeName>
        <fullName evidence="3">30S ribosomal protein S19</fullName>
    </alternativeName>
</protein>
<dbReference type="EMBL" id="CP001097">
    <property type="protein sequence ID" value="ACD91249.1"/>
    <property type="molecule type" value="Genomic_DNA"/>
</dbReference>
<dbReference type="RefSeq" id="WP_012467116.1">
    <property type="nucleotide sequence ID" value="NC_010803.1"/>
</dbReference>
<dbReference type="SMR" id="B3EGY6"/>
<dbReference type="STRING" id="290315.Clim_2225"/>
<dbReference type="KEGG" id="cli:Clim_2225"/>
<dbReference type="eggNOG" id="COG0185">
    <property type="taxonomic scope" value="Bacteria"/>
</dbReference>
<dbReference type="HOGENOM" id="CLU_144911_0_1_10"/>
<dbReference type="OrthoDB" id="9797833at2"/>
<dbReference type="Proteomes" id="UP000008841">
    <property type="component" value="Chromosome"/>
</dbReference>
<dbReference type="GO" id="GO:0005737">
    <property type="term" value="C:cytoplasm"/>
    <property type="evidence" value="ECO:0007669"/>
    <property type="project" value="UniProtKB-ARBA"/>
</dbReference>
<dbReference type="GO" id="GO:0015935">
    <property type="term" value="C:small ribosomal subunit"/>
    <property type="evidence" value="ECO:0007669"/>
    <property type="project" value="InterPro"/>
</dbReference>
<dbReference type="GO" id="GO:0019843">
    <property type="term" value="F:rRNA binding"/>
    <property type="evidence" value="ECO:0007669"/>
    <property type="project" value="UniProtKB-UniRule"/>
</dbReference>
<dbReference type="GO" id="GO:0003735">
    <property type="term" value="F:structural constituent of ribosome"/>
    <property type="evidence" value="ECO:0007669"/>
    <property type="project" value="InterPro"/>
</dbReference>
<dbReference type="GO" id="GO:0000028">
    <property type="term" value="P:ribosomal small subunit assembly"/>
    <property type="evidence" value="ECO:0007669"/>
    <property type="project" value="TreeGrafter"/>
</dbReference>
<dbReference type="GO" id="GO:0006412">
    <property type="term" value="P:translation"/>
    <property type="evidence" value="ECO:0007669"/>
    <property type="project" value="UniProtKB-UniRule"/>
</dbReference>
<dbReference type="FunFam" id="3.30.860.10:FF:000001">
    <property type="entry name" value="30S ribosomal protein S19"/>
    <property type="match status" value="1"/>
</dbReference>
<dbReference type="Gene3D" id="3.30.860.10">
    <property type="entry name" value="30s Ribosomal Protein S19, Chain A"/>
    <property type="match status" value="1"/>
</dbReference>
<dbReference type="HAMAP" id="MF_00531">
    <property type="entry name" value="Ribosomal_uS19"/>
    <property type="match status" value="1"/>
</dbReference>
<dbReference type="InterPro" id="IPR002222">
    <property type="entry name" value="Ribosomal_uS19"/>
</dbReference>
<dbReference type="InterPro" id="IPR005732">
    <property type="entry name" value="Ribosomal_uS19_bac-type"/>
</dbReference>
<dbReference type="InterPro" id="IPR020934">
    <property type="entry name" value="Ribosomal_uS19_CS"/>
</dbReference>
<dbReference type="InterPro" id="IPR023575">
    <property type="entry name" value="Ribosomal_uS19_SF"/>
</dbReference>
<dbReference type="NCBIfam" id="TIGR01050">
    <property type="entry name" value="rpsS_bact"/>
    <property type="match status" value="1"/>
</dbReference>
<dbReference type="PANTHER" id="PTHR11880">
    <property type="entry name" value="RIBOSOMAL PROTEIN S19P FAMILY MEMBER"/>
    <property type="match status" value="1"/>
</dbReference>
<dbReference type="PANTHER" id="PTHR11880:SF8">
    <property type="entry name" value="SMALL RIBOSOMAL SUBUNIT PROTEIN US19M"/>
    <property type="match status" value="1"/>
</dbReference>
<dbReference type="Pfam" id="PF00203">
    <property type="entry name" value="Ribosomal_S19"/>
    <property type="match status" value="1"/>
</dbReference>
<dbReference type="PIRSF" id="PIRSF002144">
    <property type="entry name" value="Ribosomal_S19"/>
    <property type="match status" value="1"/>
</dbReference>
<dbReference type="PRINTS" id="PR00975">
    <property type="entry name" value="RIBOSOMALS19"/>
</dbReference>
<dbReference type="SUPFAM" id="SSF54570">
    <property type="entry name" value="Ribosomal protein S19"/>
    <property type="match status" value="1"/>
</dbReference>
<dbReference type="PROSITE" id="PS00323">
    <property type="entry name" value="RIBOSOMAL_S19"/>
    <property type="match status" value="1"/>
</dbReference>
<reference key="1">
    <citation type="submission" date="2008-05" db="EMBL/GenBank/DDBJ databases">
        <title>Complete sequence of Chlorobium limicola DSM 245.</title>
        <authorList>
            <consortium name="US DOE Joint Genome Institute"/>
            <person name="Lucas S."/>
            <person name="Copeland A."/>
            <person name="Lapidus A."/>
            <person name="Glavina del Rio T."/>
            <person name="Dalin E."/>
            <person name="Tice H."/>
            <person name="Bruce D."/>
            <person name="Goodwin L."/>
            <person name="Pitluck S."/>
            <person name="Schmutz J."/>
            <person name="Larimer F."/>
            <person name="Land M."/>
            <person name="Hauser L."/>
            <person name="Kyrpides N."/>
            <person name="Ovchinnikova G."/>
            <person name="Zhao F."/>
            <person name="Li T."/>
            <person name="Liu Z."/>
            <person name="Overmann J."/>
            <person name="Bryant D.A."/>
            <person name="Richardson P."/>
        </authorList>
    </citation>
    <scope>NUCLEOTIDE SEQUENCE [LARGE SCALE GENOMIC DNA]</scope>
    <source>
        <strain>DSM 245 / NBRC 103803 / 6330</strain>
    </source>
</reference>
<gene>
    <name evidence="1" type="primary">rpsS</name>
    <name type="ordered locus">Clim_2225</name>
</gene>
<accession>B3EGY6</accession>